<name>RHRP_MYCTO</name>
<organism>
    <name type="scientific">Mycobacterium tuberculosis (strain CDC 1551 / Oshkosh)</name>
    <dbReference type="NCBI Taxonomy" id="83331"/>
    <lineage>
        <taxon>Bacteria</taxon>
        <taxon>Bacillati</taxon>
        <taxon>Actinomycetota</taxon>
        <taxon>Actinomycetes</taxon>
        <taxon>Mycobacteriales</taxon>
        <taxon>Mycobacteriaceae</taxon>
        <taxon>Mycobacterium</taxon>
        <taxon>Mycobacterium tuberculosis complex</taxon>
    </lineage>
</organism>
<dbReference type="EMBL" id="AE000516">
    <property type="protein sequence ID" value="AAK44738.1"/>
    <property type="molecule type" value="Genomic_DNA"/>
</dbReference>
<dbReference type="PIR" id="B70745">
    <property type="entry name" value="B70745"/>
</dbReference>
<dbReference type="SMR" id="P9WKU4"/>
<dbReference type="KEGG" id="mtc:MT0515"/>
<dbReference type="PATRIC" id="fig|83331.31.peg.545"/>
<dbReference type="HOGENOM" id="CLU_071594_0_0_11"/>
<dbReference type="Proteomes" id="UP000001020">
    <property type="component" value="Chromosome"/>
</dbReference>
<protein>
    <recommendedName>
        <fullName evidence="1">Probable redox regulatory protein MT0515</fullName>
    </recommendedName>
</protein>
<comment type="function">
    <text evidence="1">Essential for maintaining intracellular redox homeostasis.</text>
</comment>
<comment type="similarity">
    <text evidence="2">Belongs to the Rv0495c family.</text>
</comment>
<evidence type="ECO:0000250" key="1">
    <source>
        <dbReference type="UniProtKB" id="P9WKU5"/>
    </source>
</evidence>
<evidence type="ECO:0000305" key="2"/>
<gene>
    <name type="ordered locus">MT0515</name>
</gene>
<sequence>MWRPAQGARWHVPAVLGYGGIPRRASWSNVESVANSRRRPVHPGQEVELDFAREWVEFYDPDNPEHLIAADLTWLLSRWACVFGTPACQGTVAGRPNDGCCSHGAFLSDDDDRTRLADAVHKLTDDDWQFRAKGLRRKGYLELDEHDGQPQHRTRKHKGACIFLNRPGFAGGAGCALHSKALKLGVPPLTMKPDVCWQLPIRRSQEWVTRPDGTEILKTTLTEYDRRGWGSGGADLHWYCTGDPAAHVGTKQVWQSLADELTELLGEKAYGELAAMCKRRSQLGLIAVHPATRAAQ</sequence>
<reference key="1">
    <citation type="journal article" date="2002" name="J. Bacteriol.">
        <title>Whole-genome comparison of Mycobacterium tuberculosis clinical and laboratory strains.</title>
        <authorList>
            <person name="Fleischmann R.D."/>
            <person name="Alland D."/>
            <person name="Eisen J.A."/>
            <person name="Carpenter L."/>
            <person name="White O."/>
            <person name="Peterson J.D."/>
            <person name="DeBoy R.T."/>
            <person name="Dodson R.J."/>
            <person name="Gwinn M.L."/>
            <person name="Haft D.H."/>
            <person name="Hickey E.K."/>
            <person name="Kolonay J.F."/>
            <person name="Nelson W.C."/>
            <person name="Umayam L.A."/>
            <person name="Ermolaeva M.D."/>
            <person name="Salzberg S.L."/>
            <person name="Delcher A."/>
            <person name="Utterback T.R."/>
            <person name="Weidman J.F."/>
            <person name="Khouri H.M."/>
            <person name="Gill J."/>
            <person name="Mikula A."/>
            <person name="Bishai W."/>
            <person name="Jacobs W.R. Jr."/>
            <person name="Venter J.C."/>
            <person name="Fraser C.M."/>
        </authorList>
    </citation>
    <scope>NUCLEOTIDE SEQUENCE [LARGE SCALE GENOMIC DNA]</scope>
    <source>
        <strain>CDC 1551 / Oshkosh</strain>
    </source>
</reference>
<proteinExistence type="inferred from homology"/>
<accession>P9WKU4</accession>
<accession>L0T3S8</accession>
<accession>P64713</accession>
<accession>Q11160</accession>
<feature type="chain" id="PRO_0000427593" description="Probable redox regulatory protein MT0515">
    <location>
        <begin position="1"/>
        <end position="296"/>
    </location>
</feature>
<keyword id="KW-1185">Reference proteome</keyword>